<protein>
    <recommendedName>
        <fullName>Translocon-associated protein subunit alpha</fullName>
        <shortName>TRAP-alpha</shortName>
    </recommendedName>
    <alternativeName>
        <fullName>Signal sequence receptor subunit alpha</fullName>
        <shortName>SSR-alpha</shortName>
    </alternativeName>
</protein>
<keyword id="KW-0106">Calcium</keyword>
<keyword id="KW-0256">Endoplasmic reticulum</keyword>
<keyword id="KW-0325">Glycoprotein</keyword>
<keyword id="KW-0472">Membrane</keyword>
<keyword id="KW-0597">Phosphoprotein</keyword>
<keyword id="KW-1185">Reference proteome</keyword>
<keyword id="KW-0732">Signal</keyword>
<keyword id="KW-0812">Transmembrane</keyword>
<keyword id="KW-1133">Transmembrane helix</keyword>
<name>SSRA_BOVIN</name>
<accession>A6QLP7</accession>
<organism>
    <name type="scientific">Bos taurus</name>
    <name type="common">Bovine</name>
    <dbReference type="NCBI Taxonomy" id="9913"/>
    <lineage>
        <taxon>Eukaryota</taxon>
        <taxon>Metazoa</taxon>
        <taxon>Chordata</taxon>
        <taxon>Craniata</taxon>
        <taxon>Vertebrata</taxon>
        <taxon>Euteleostomi</taxon>
        <taxon>Mammalia</taxon>
        <taxon>Eutheria</taxon>
        <taxon>Laurasiatheria</taxon>
        <taxon>Artiodactyla</taxon>
        <taxon>Ruminantia</taxon>
        <taxon>Pecora</taxon>
        <taxon>Bovidae</taxon>
        <taxon>Bovinae</taxon>
        <taxon>Bos</taxon>
    </lineage>
</organism>
<reference key="1">
    <citation type="submission" date="2007-06" db="EMBL/GenBank/DDBJ databases">
        <authorList>
            <consortium name="NIH - Mammalian Gene Collection (MGC) project"/>
        </authorList>
    </citation>
    <scope>NUCLEOTIDE SEQUENCE [LARGE SCALE MRNA]</scope>
    <source>
        <strain>Hereford</strain>
        <tissue>Fetal pons</tissue>
    </source>
</reference>
<gene>
    <name type="primary">SSR1</name>
</gene>
<comment type="function">
    <text evidence="1">TRAP proteins are part of a complex whose function is to bind calcium to the ER membrane and thereby regulate the retention of ER resident proteins. May be involved in the recycling of the translocation apparatus after completion of the translocation process or may function as a membrane-bound chaperone facilitating folding of translocated proteins (By similarity).</text>
</comment>
<comment type="subunit">
    <text evidence="1">Heterotetramer of TRAP-alpha, TRAP-beta, TRAP-delta and TRAP-gamma. Interacts with palmitoylated calnexin (CALX), the interaction is required for efficient folding of glycosylated proteins (By similarity).</text>
</comment>
<comment type="subcellular location">
    <subcellularLocation>
        <location evidence="1">Endoplasmic reticulum membrane</location>
        <topology evidence="1">Single-pass type I membrane protein</topology>
    </subcellularLocation>
</comment>
<comment type="domain">
    <text>Shows a remarkable charge distribution with the N-terminus being highly negatively charged, and the cytoplasmic C-terminus positively charged.</text>
</comment>
<comment type="PTM">
    <text evidence="1">Phosphorylated in its cytoplasmic tail.</text>
</comment>
<comment type="miscellaneous">
    <text evidence="1">Seems to bind calcium.</text>
</comment>
<comment type="similarity">
    <text evidence="5">Belongs to the TRAP-alpha family.</text>
</comment>
<feature type="signal peptide" evidence="3">
    <location>
        <begin position="1"/>
        <end position="20"/>
    </location>
</feature>
<feature type="chain" id="PRO_0000330739" description="Translocon-associated protein subunit alpha">
    <location>
        <begin position="21"/>
        <end position="286"/>
    </location>
</feature>
<feature type="topological domain" description="Lumenal" evidence="3">
    <location>
        <begin position="21"/>
        <end position="207"/>
    </location>
</feature>
<feature type="transmembrane region" description="Helical" evidence="3">
    <location>
        <begin position="208"/>
        <end position="228"/>
    </location>
</feature>
<feature type="topological domain" description="Cytoplasmic" evidence="3">
    <location>
        <begin position="229"/>
        <end position="286"/>
    </location>
</feature>
<feature type="region of interest" description="Disordered" evidence="4">
    <location>
        <begin position="37"/>
        <end position="83"/>
    </location>
</feature>
<feature type="region of interest" description="Disordered" evidence="4">
    <location>
        <begin position="261"/>
        <end position="286"/>
    </location>
</feature>
<feature type="compositionally biased region" description="Acidic residues" evidence="4">
    <location>
        <begin position="37"/>
        <end position="75"/>
    </location>
</feature>
<feature type="compositionally biased region" description="Basic residues" evidence="4">
    <location>
        <begin position="268"/>
        <end position="279"/>
    </location>
</feature>
<feature type="modified residue" description="Phosphoserine" evidence="2">
    <location>
        <position position="247"/>
    </location>
</feature>
<feature type="modified residue" description="Phosphothreonine" evidence="2">
    <location>
        <position position="260"/>
    </location>
</feature>
<feature type="modified residue" description="Phosphoserine" evidence="2">
    <location>
        <position position="268"/>
    </location>
</feature>
<feature type="glycosylation site" description="N-linked (GlcNAc...) asparagine" evidence="3">
    <location>
        <position position="136"/>
    </location>
</feature>
<feature type="glycosylation site" description="N-linked (GlcNAc...) asparagine" evidence="3">
    <location>
        <position position="191"/>
    </location>
</feature>
<evidence type="ECO:0000250" key="1"/>
<evidence type="ECO:0000250" key="2">
    <source>
        <dbReference type="UniProtKB" id="P43307"/>
    </source>
</evidence>
<evidence type="ECO:0000255" key="3"/>
<evidence type="ECO:0000256" key="4">
    <source>
        <dbReference type="SAM" id="MobiDB-lite"/>
    </source>
</evidence>
<evidence type="ECO:0000305" key="5"/>
<dbReference type="EMBL" id="BC148041">
    <property type="protein sequence ID" value="AAI48042.1"/>
    <property type="molecule type" value="mRNA"/>
</dbReference>
<dbReference type="RefSeq" id="NP_001095592.1">
    <property type="nucleotide sequence ID" value="NM_001102122.2"/>
</dbReference>
<dbReference type="SMR" id="A6QLP7"/>
<dbReference type="FunCoup" id="A6QLP7">
    <property type="interactions" value="3455"/>
</dbReference>
<dbReference type="STRING" id="9913.ENSBTAP00000072467"/>
<dbReference type="GlyCosmos" id="A6QLP7">
    <property type="glycosylation" value="2 sites, No reported glycans"/>
</dbReference>
<dbReference type="GlyGen" id="A6QLP7">
    <property type="glycosylation" value="2 sites"/>
</dbReference>
<dbReference type="PaxDb" id="9913-ENSBTAP00000008253"/>
<dbReference type="PeptideAtlas" id="A6QLP7"/>
<dbReference type="Ensembl" id="ENSBTAT00000008253.6">
    <property type="protein sequence ID" value="ENSBTAP00000008253.5"/>
    <property type="gene ID" value="ENSBTAG00000022731.6"/>
</dbReference>
<dbReference type="GeneID" id="529312"/>
<dbReference type="KEGG" id="bta:529312"/>
<dbReference type="CTD" id="6745"/>
<dbReference type="VEuPathDB" id="HostDB:ENSBTAG00000022731"/>
<dbReference type="VGNC" id="VGNC:35319">
    <property type="gene designation" value="SSR1"/>
</dbReference>
<dbReference type="eggNOG" id="KOG1631">
    <property type="taxonomic scope" value="Eukaryota"/>
</dbReference>
<dbReference type="GeneTree" id="ENSGT00400000022103"/>
<dbReference type="HOGENOM" id="CLU_073618_0_0_1"/>
<dbReference type="InParanoid" id="A6QLP7"/>
<dbReference type="OrthoDB" id="1926781at2759"/>
<dbReference type="TreeFam" id="TF321074"/>
<dbReference type="Proteomes" id="UP000009136">
    <property type="component" value="Chromosome 23"/>
</dbReference>
<dbReference type="Bgee" id="ENSBTAG00000022731">
    <property type="expression patterns" value="Expressed in spermatocyte and 106 other cell types or tissues"/>
</dbReference>
<dbReference type="GO" id="GO:0005783">
    <property type="term" value="C:endoplasmic reticulum"/>
    <property type="evidence" value="ECO:0000318"/>
    <property type="project" value="GO_Central"/>
</dbReference>
<dbReference type="GO" id="GO:0005789">
    <property type="term" value="C:endoplasmic reticulum membrane"/>
    <property type="evidence" value="ECO:0007669"/>
    <property type="project" value="UniProtKB-SubCell"/>
</dbReference>
<dbReference type="InterPro" id="IPR005595">
    <property type="entry name" value="TRAP_alpha"/>
</dbReference>
<dbReference type="PANTHER" id="PTHR12924:SF0">
    <property type="entry name" value="TRANSLOCON-ASSOCIATED PROTEIN SUBUNIT ALPHA"/>
    <property type="match status" value="1"/>
</dbReference>
<dbReference type="PANTHER" id="PTHR12924">
    <property type="entry name" value="TRANSLOCON-ASSOCIATED PROTEIN, ALPHA SUBUNIT"/>
    <property type="match status" value="1"/>
</dbReference>
<dbReference type="Pfam" id="PF03896">
    <property type="entry name" value="TRAP_alpha"/>
    <property type="match status" value="1"/>
</dbReference>
<sequence>MSSLRRLLLLLLLVFPATLLLRVGPGGSLAVAQDLTEDEETVEDSIIEDEDDEAEVEEDEPTDLAEDKEEDDVSGEPEASPSADTTILFVKGEDFPANNIVKFLVGFTNKGTEDFIVESLDASFRYPQDYQFYIQNFTALPLNTVVPPQRQATFEYSFIPAEPMGGRPFGLVINLNYKDLNGNVFQDAVFNQTVTIIEREDGLDGETIFMYMFLAGLGLLVVVGLHQLLESRKRKRPIQKVEMGTSSQNDVDMSWIPQETLNQINKASPRRLPRKRAQKRSVGSDE</sequence>
<proteinExistence type="evidence at transcript level"/>